<feature type="chain" id="PRO_0000176684" description="Large ribosomal subunit protein bL9">
    <location>
        <begin position="1"/>
        <end position="148"/>
    </location>
</feature>
<comment type="function">
    <text evidence="1">Binds to the 23S rRNA.</text>
</comment>
<comment type="similarity">
    <text evidence="1">Belongs to the bacterial ribosomal protein bL9 family.</text>
</comment>
<keyword id="KW-1185">Reference proteome</keyword>
<keyword id="KW-0687">Ribonucleoprotein</keyword>
<keyword id="KW-0689">Ribosomal protein</keyword>
<keyword id="KW-0694">RNA-binding</keyword>
<keyword id="KW-0699">rRNA-binding</keyword>
<accession>Q4A166</accession>
<organism>
    <name type="scientific">Staphylococcus saprophyticus subsp. saprophyticus (strain ATCC 15305 / DSM 20229 / NCIMB 8711 / NCTC 7292 / S-41)</name>
    <dbReference type="NCBI Taxonomy" id="342451"/>
    <lineage>
        <taxon>Bacteria</taxon>
        <taxon>Bacillati</taxon>
        <taxon>Bacillota</taxon>
        <taxon>Bacilli</taxon>
        <taxon>Bacillales</taxon>
        <taxon>Staphylococcaceae</taxon>
        <taxon>Staphylococcus</taxon>
    </lineage>
</organism>
<evidence type="ECO:0000255" key="1">
    <source>
        <dbReference type="HAMAP-Rule" id="MF_00503"/>
    </source>
</evidence>
<evidence type="ECO:0000305" key="2"/>
<sequence>MKVIFTQDVKGKGKKGEVKDVPVGYANNFLLKKNMAVEATPGNLRQLEQKNKAAEAERQQEIEDAKKLKEQLSEIEVEVSAKTGEGGKLFGSVSTKQITQALQQQHDIKIDKRKMDLPNGIHALGYTNVPVKLDKEVEGTIRVHTVEQ</sequence>
<proteinExistence type="inferred from homology"/>
<reference key="1">
    <citation type="journal article" date="2005" name="Proc. Natl. Acad. Sci. U.S.A.">
        <title>Whole genome sequence of Staphylococcus saprophyticus reveals the pathogenesis of uncomplicated urinary tract infection.</title>
        <authorList>
            <person name="Kuroda M."/>
            <person name="Yamashita A."/>
            <person name="Hirakawa H."/>
            <person name="Kumano M."/>
            <person name="Morikawa K."/>
            <person name="Higashide M."/>
            <person name="Maruyama A."/>
            <person name="Inose Y."/>
            <person name="Matoba K."/>
            <person name="Toh H."/>
            <person name="Kuhara S."/>
            <person name="Hattori M."/>
            <person name="Ohta T."/>
        </authorList>
    </citation>
    <scope>NUCLEOTIDE SEQUENCE [LARGE SCALE GENOMIC DNA]</scope>
    <source>
        <strain>ATCC 15305 / DSM 20229 / NCIMB 8711 / NCTC 7292 / S-41</strain>
    </source>
</reference>
<dbReference type="EMBL" id="AP008934">
    <property type="protein sequence ID" value="BAE17160.1"/>
    <property type="molecule type" value="Genomic_DNA"/>
</dbReference>
<dbReference type="RefSeq" id="WP_011302021.1">
    <property type="nucleotide sequence ID" value="NZ_MTGA01000035.1"/>
</dbReference>
<dbReference type="SMR" id="Q4A166"/>
<dbReference type="GeneID" id="3615241"/>
<dbReference type="KEGG" id="ssp:SSP0015"/>
<dbReference type="PATRIC" id="fig|342451.11.peg.16"/>
<dbReference type="eggNOG" id="COG0359">
    <property type="taxonomic scope" value="Bacteria"/>
</dbReference>
<dbReference type="HOGENOM" id="CLU_078938_3_2_9"/>
<dbReference type="OrthoDB" id="9788336at2"/>
<dbReference type="Proteomes" id="UP000006371">
    <property type="component" value="Chromosome"/>
</dbReference>
<dbReference type="GO" id="GO:1990904">
    <property type="term" value="C:ribonucleoprotein complex"/>
    <property type="evidence" value="ECO:0007669"/>
    <property type="project" value="UniProtKB-KW"/>
</dbReference>
<dbReference type="GO" id="GO:0005840">
    <property type="term" value="C:ribosome"/>
    <property type="evidence" value="ECO:0007669"/>
    <property type="project" value="UniProtKB-KW"/>
</dbReference>
<dbReference type="GO" id="GO:0019843">
    <property type="term" value="F:rRNA binding"/>
    <property type="evidence" value="ECO:0007669"/>
    <property type="project" value="UniProtKB-UniRule"/>
</dbReference>
<dbReference type="GO" id="GO:0003735">
    <property type="term" value="F:structural constituent of ribosome"/>
    <property type="evidence" value="ECO:0007669"/>
    <property type="project" value="InterPro"/>
</dbReference>
<dbReference type="GO" id="GO:0006412">
    <property type="term" value="P:translation"/>
    <property type="evidence" value="ECO:0007669"/>
    <property type="project" value="UniProtKB-UniRule"/>
</dbReference>
<dbReference type="FunFam" id="3.10.430.100:FF:000002">
    <property type="entry name" value="50S ribosomal protein L9"/>
    <property type="match status" value="1"/>
</dbReference>
<dbReference type="FunFam" id="3.40.5.10:FF:000002">
    <property type="entry name" value="50S ribosomal protein L9"/>
    <property type="match status" value="1"/>
</dbReference>
<dbReference type="Gene3D" id="3.10.430.100">
    <property type="entry name" value="Ribosomal protein L9, C-terminal domain"/>
    <property type="match status" value="1"/>
</dbReference>
<dbReference type="Gene3D" id="3.40.5.10">
    <property type="entry name" value="Ribosomal protein L9, N-terminal domain"/>
    <property type="match status" value="1"/>
</dbReference>
<dbReference type="HAMAP" id="MF_00503">
    <property type="entry name" value="Ribosomal_bL9"/>
    <property type="match status" value="1"/>
</dbReference>
<dbReference type="InterPro" id="IPR000244">
    <property type="entry name" value="Ribosomal_bL9"/>
</dbReference>
<dbReference type="InterPro" id="IPR009027">
    <property type="entry name" value="Ribosomal_bL9/RNase_H1_N"/>
</dbReference>
<dbReference type="InterPro" id="IPR020594">
    <property type="entry name" value="Ribosomal_bL9_bac/chp"/>
</dbReference>
<dbReference type="InterPro" id="IPR020069">
    <property type="entry name" value="Ribosomal_bL9_C"/>
</dbReference>
<dbReference type="InterPro" id="IPR036791">
    <property type="entry name" value="Ribosomal_bL9_C_sf"/>
</dbReference>
<dbReference type="InterPro" id="IPR020070">
    <property type="entry name" value="Ribosomal_bL9_N"/>
</dbReference>
<dbReference type="InterPro" id="IPR036935">
    <property type="entry name" value="Ribosomal_bL9_N_sf"/>
</dbReference>
<dbReference type="NCBIfam" id="TIGR00158">
    <property type="entry name" value="L9"/>
    <property type="match status" value="1"/>
</dbReference>
<dbReference type="PANTHER" id="PTHR21368">
    <property type="entry name" value="50S RIBOSOMAL PROTEIN L9"/>
    <property type="match status" value="1"/>
</dbReference>
<dbReference type="Pfam" id="PF03948">
    <property type="entry name" value="Ribosomal_L9_C"/>
    <property type="match status" value="1"/>
</dbReference>
<dbReference type="Pfam" id="PF01281">
    <property type="entry name" value="Ribosomal_L9_N"/>
    <property type="match status" value="1"/>
</dbReference>
<dbReference type="SUPFAM" id="SSF55658">
    <property type="entry name" value="L9 N-domain-like"/>
    <property type="match status" value="1"/>
</dbReference>
<dbReference type="SUPFAM" id="SSF55653">
    <property type="entry name" value="Ribosomal protein L9 C-domain"/>
    <property type="match status" value="1"/>
</dbReference>
<dbReference type="PROSITE" id="PS00651">
    <property type="entry name" value="RIBOSOMAL_L9"/>
    <property type="match status" value="1"/>
</dbReference>
<name>RL9_STAS1</name>
<protein>
    <recommendedName>
        <fullName evidence="1">Large ribosomal subunit protein bL9</fullName>
    </recommendedName>
    <alternativeName>
        <fullName evidence="2">50S ribosomal protein L9</fullName>
    </alternativeName>
</protein>
<gene>
    <name evidence="1" type="primary">rplI</name>
    <name type="ordered locus">SSP0015</name>
</gene>